<gene>
    <name evidence="1" type="primary">glyS</name>
    <name type="ordered locus">EcHS_A3761</name>
</gene>
<keyword id="KW-0030">Aminoacyl-tRNA synthetase</keyword>
<keyword id="KW-0067">ATP-binding</keyword>
<keyword id="KW-0963">Cytoplasm</keyword>
<keyword id="KW-0436">Ligase</keyword>
<keyword id="KW-0547">Nucleotide-binding</keyword>
<keyword id="KW-0648">Protein biosynthesis</keyword>
<reference key="1">
    <citation type="journal article" date="2008" name="J. Bacteriol.">
        <title>The pangenome structure of Escherichia coli: comparative genomic analysis of E. coli commensal and pathogenic isolates.</title>
        <authorList>
            <person name="Rasko D.A."/>
            <person name="Rosovitz M.J."/>
            <person name="Myers G.S.A."/>
            <person name="Mongodin E.F."/>
            <person name="Fricke W.F."/>
            <person name="Gajer P."/>
            <person name="Crabtree J."/>
            <person name="Sebaihia M."/>
            <person name="Thomson N.R."/>
            <person name="Chaudhuri R."/>
            <person name="Henderson I.R."/>
            <person name="Sperandio V."/>
            <person name="Ravel J."/>
        </authorList>
    </citation>
    <scope>NUCLEOTIDE SEQUENCE [LARGE SCALE GENOMIC DNA]</scope>
    <source>
        <strain>HS</strain>
    </source>
</reference>
<proteinExistence type="inferred from homology"/>
<evidence type="ECO:0000255" key="1">
    <source>
        <dbReference type="HAMAP-Rule" id="MF_00255"/>
    </source>
</evidence>
<name>SYGB_ECOHS</name>
<comment type="catalytic activity">
    <reaction evidence="1">
        <text>tRNA(Gly) + glycine + ATP = glycyl-tRNA(Gly) + AMP + diphosphate</text>
        <dbReference type="Rhea" id="RHEA:16013"/>
        <dbReference type="Rhea" id="RHEA-COMP:9664"/>
        <dbReference type="Rhea" id="RHEA-COMP:9683"/>
        <dbReference type="ChEBI" id="CHEBI:30616"/>
        <dbReference type="ChEBI" id="CHEBI:33019"/>
        <dbReference type="ChEBI" id="CHEBI:57305"/>
        <dbReference type="ChEBI" id="CHEBI:78442"/>
        <dbReference type="ChEBI" id="CHEBI:78522"/>
        <dbReference type="ChEBI" id="CHEBI:456215"/>
        <dbReference type="EC" id="6.1.1.14"/>
    </reaction>
</comment>
<comment type="subunit">
    <text evidence="1">Tetramer of two alpha and two beta subunits.</text>
</comment>
<comment type="subcellular location">
    <subcellularLocation>
        <location evidence="1">Cytoplasm</location>
    </subcellularLocation>
</comment>
<comment type="similarity">
    <text evidence="1">Belongs to the class-II aminoacyl-tRNA synthetase family.</text>
</comment>
<protein>
    <recommendedName>
        <fullName evidence="1">Glycine--tRNA ligase beta subunit</fullName>
        <ecNumber evidence="1">6.1.1.14</ecNumber>
    </recommendedName>
    <alternativeName>
        <fullName evidence="1">Glycyl-tRNA synthetase beta subunit</fullName>
        <shortName evidence="1">GlyRS</shortName>
    </alternativeName>
</protein>
<feature type="chain" id="PRO_1000059060" description="Glycine--tRNA ligase beta subunit">
    <location>
        <begin position="1"/>
        <end position="689"/>
    </location>
</feature>
<dbReference type="EC" id="6.1.1.14" evidence="1"/>
<dbReference type="EMBL" id="CP000802">
    <property type="protein sequence ID" value="ABV07970.1"/>
    <property type="molecule type" value="Genomic_DNA"/>
</dbReference>
<dbReference type="RefSeq" id="WP_001291772.1">
    <property type="nucleotide sequence ID" value="NC_009800.1"/>
</dbReference>
<dbReference type="SMR" id="A8A616"/>
<dbReference type="KEGG" id="ecx:EcHS_A3761"/>
<dbReference type="HOGENOM" id="CLU_007220_2_2_6"/>
<dbReference type="GO" id="GO:0005829">
    <property type="term" value="C:cytosol"/>
    <property type="evidence" value="ECO:0007669"/>
    <property type="project" value="TreeGrafter"/>
</dbReference>
<dbReference type="GO" id="GO:0004814">
    <property type="term" value="F:arginine-tRNA ligase activity"/>
    <property type="evidence" value="ECO:0007669"/>
    <property type="project" value="InterPro"/>
</dbReference>
<dbReference type="GO" id="GO:0005524">
    <property type="term" value="F:ATP binding"/>
    <property type="evidence" value="ECO:0007669"/>
    <property type="project" value="UniProtKB-UniRule"/>
</dbReference>
<dbReference type="GO" id="GO:0004820">
    <property type="term" value="F:glycine-tRNA ligase activity"/>
    <property type="evidence" value="ECO:0007669"/>
    <property type="project" value="UniProtKB-UniRule"/>
</dbReference>
<dbReference type="GO" id="GO:0006420">
    <property type="term" value="P:arginyl-tRNA aminoacylation"/>
    <property type="evidence" value="ECO:0007669"/>
    <property type="project" value="InterPro"/>
</dbReference>
<dbReference type="GO" id="GO:0006426">
    <property type="term" value="P:glycyl-tRNA aminoacylation"/>
    <property type="evidence" value="ECO:0007669"/>
    <property type="project" value="UniProtKB-UniRule"/>
</dbReference>
<dbReference type="HAMAP" id="MF_00255">
    <property type="entry name" value="Gly_tRNA_synth_beta"/>
    <property type="match status" value="1"/>
</dbReference>
<dbReference type="InterPro" id="IPR008909">
    <property type="entry name" value="DALR_anticod-bd"/>
</dbReference>
<dbReference type="InterPro" id="IPR015944">
    <property type="entry name" value="Gly-tRNA-synth_bsu"/>
</dbReference>
<dbReference type="InterPro" id="IPR006194">
    <property type="entry name" value="Gly-tRNA-synth_heterodimer"/>
</dbReference>
<dbReference type="NCBIfam" id="TIGR00211">
    <property type="entry name" value="glyS"/>
    <property type="match status" value="1"/>
</dbReference>
<dbReference type="PANTHER" id="PTHR30075:SF2">
    <property type="entry name" value="GLYCINE--TRNA LIGASE, CHLOROPLASTIC_MITOCHONDRIAL 2"/>
    <property type="match status" value="1"/>
</dbReference>
<dbReference type="PANTHER" id="PTHR30075">
    <property type="entry name" value="GLYCYL-TRNA SYNTHETASE"/>
    <property type="match status" value="1"/>
</dbReference>
<dbReference type="Pfam" id="PF05746">
    <property type="entry name" value="DALR_1"/>
    <property type="match status" value="1"/>
</dbReference>
<dbReference type="Pfam" id="PF02092">
    <property type="entry name" value="tRNA_synt_2f"/>
    <property type="match status" value="1"/>
</dbReference>
<dbReference type="PRINTS" id="PR01045">
    <property type="entry name" value="TRNASYNTHGB"/>
</dbReference>
<dbReference type="SUPFAM" id="SSF109604">
    <property type="entry name" value="HD-domain/PDEase-like"/>
    <property type="match status" value="1"/>
</dbReference>
<dbReference type="PROSITE" id="PS50861">
    <property type="entry name" value="AA_TRNA_LIGASE_II_GLYAB"/>
    <property type="match status" value="1"/>
</dbReference>
<sequence>MSEKTFLVEIGTEELPPKALRSLAESFAANFTAELDNAGLAHGTVQWFAAPRRLALKVANLAEAQPDREIEKRGPAIAQAFDAEGKPSKAAEGWARGCGITVDQAERLTTDKGEWLLYRAHVKGESTEALLPNMVATSLAKLPIPKLMRWGASDVHFVRPVHTVTLLLGDKVIPATILGIQSDRVIRGHRFMGEPEFTIDNADQYPEILRERGKVIADYEERKAKIKADAEEAARKIGGNADLSESLLEEVASLVEWPVVLTAKFEEKFLAVPAEALVYTMKGDQKYFPVYANDGKLLPNFIFVANIESKDPQQIISGNEKVVRPRLADAEFFFNTDRKKRLEDNLPRLQTVLFQQQLGTLRDKTDRIQALAGWIAEQIGADVNHATRAGLLSKCDLMTNMVFEFTDTQGVMGMHYARHDGEAEDVAVALNEQYQPRFAGDDLPSNPVACALAIADKMDTLAGIFGIGQHPKGDKDPFALRRAALGVLRIIVEKNLNLDLQTLTEEAVRLYGDKLTNANVVDDVIDFMLGRFRAWYQDEGYTVDTIQAVLARRPTRPADFDARMKAVSHFRTLDAAAALAAANKRVSNILAKSDEVLSDRVNASTLKEPEEIKLAMQVVVLRDKLEPYFTEGRYQDALVELAELREPVDAFFDKVMVMVDDKELRINRLTMLEKLRELFLRVADISLLQ</sequence>
<organism>
    <name type="scientific">Escherichia coli O9:H4 (strain HS)</name>
    <dbReference type="NCBI Taxonomy" id="331112"/>
    <lineage>
        <taxon>Bacteria</taxon>
        <taxon>Pseudomonadati</taxon>
        <taxon>Pseudomonadota</taxon>
        <taxon>Gammaproteobacteria</taxon>
        <taxon>Enterobacterales</taxon>
        <taxon>Enterobacteriaceae</taxon>
        <taxon>Escherichia</taxon>
    </lineage>
</organism>
<accession>A8A616</accession>